<comment type="function">
    <text evidence="1">Catalyzes the condensation of carbamoyl phosphate and aspartate to form carbamoyl aspartate and inorganic phosphate, the committed step in the de novo pyrimidine nucleotide biosynthesis pathway.</text>
</comment>
<comment type="catalytic activity">
    <reaction evidence="1">
        <text>carbamoyl phosphate + L-aspartate = N-carbamoyl-L-aspartate + phosphate + H(+)</text>
        <dbReference type="Rhea" id="RHEA:20013"/>
        <dbReference type="ChEBI" id="CHEBI:15378"/>
        <dbReference type="ChEBI" id="CHEBI:29991"/>
        <dbReference type="ChEBI" id="CHEBI:32814"/>
        <dbReference type="ChEBI" id="CHEBI:43474"/>
        <dbReference type="ChEBI" id="CHEBI:58228"/>
        <dbReference type="EC" id="2.1.3.2"/>
    </reaction>
</comment>
<comment type="pathway">
    <text evidence="1">Pyrimidine metabolism; UMP biosynthesis via de novo pathway; (S)-dihydroorotate from bicarbonate: step 2/3.</text>
</comment>
<comment type="subunit">
    <text evidence="1">Heterododecamer (2C3:3R2) of six catalytic PyrB chains organized as two trimers (C3), and six regulatory PyrI chains organized as three dimers (R2).</text>
</comment>
<comment type="similarity">
    <text evidence="1">Belongs to the aspartate/ornithine carbamoyltransferase superfamily. ATCase family.</text>
</comment>
<feature type="chain" id="PRO_1000073742" description="Aspartate carbamoyltransferase catalytic subunit">
    <location>
        <begin position="1"/>
        <end position="293"/>
    </location>
</feature>
<feature type="binding site" evidence="1">
    <location>
        <position position="50"/>
    </location>
    <ligand>
        <name>carbamoyl phosphate</name>
        <dbReference type="ChEBI" id="CHEBI:58228"/>
    </ligand>
</feature>
<feature type="binding site" evidence="1">
    <location>
        <position position="51"/>
    </location>
    <ligand>
        <name>carbamoyl phosphate</name>
        <dbReference type="ChEBI" id="CHEBI:58228"/>
    </ligand>
</feature>
<feature type="binding site" evidence="1">
    <location>
        <position position="78"/>
    </location>
    <ligand>
        <name>L-aspartate</name>
        <dbReference type="ChEBI" id="CHEBI:29991"/>
    </ligand>
</feature>
<feature type="binding site" evidence="1">
    <location>
        <position position="100"/>
    </location>
    <ligand>
        <name>carbamoyl phosphate</name>
        <dbReference type="ChEBI" id="CHEBI:58228"/>
    </ligand>
</feature>
<feature type="binding site" evidence="1">
    <location>
        <position position="127"/>
    </location>
    <ligand>
        <name>carbamoyl phosphate</name>
        <dbReference type="ChEBI" id="CHEBI:58228"/>
    </ligand>
</feature>
<feature type="binding site" evidence="1">
    <location>
        <position position="130"/>
    </location>
    <ligand>
        <name>carbamoyl phosphate</name>
        <dbReference type="ChEBI" id="CHEBI:58228"/>
    </ligand>
</feature>
<feature type="binding site" evidence="1">
    <location>
        <position position="160"/>
    </location>
    <ligand>
        <name>L-aspartate</name>
        <dbReference type="ChEBI" id="CHEBI:29991"/>
    </ligand>
</feature>
<feature type="binding site" evidence="1">
    <location>
        <position position="210"/>
    </location>
    <ligand>
        <name>L-aspartate</name>
        <dbReference type="ChEBI" id="CHEBI:29991"/>
    </ligand>
</feature>
<feature type="binding site" evidence="1">
    <location>
        <position position="253"/>
    </location>
    <ligand>
        <name>carbamoyl phosphate</name>
        <dbReference type="ChEBI" id="CHEBI:58228"/>
    </ligand>
</feature>
<feature type="binding site" evidence="1">
    <location>
        <position position="254"/>
    </location>
    <ligand>
        <name>carbamoyl phosphate</name>
        <dbReference type="ChEBI" id="CHEBI:58228"/>
    </ligand>
</feature>
<proteinExistence type="inferred from homology"/>
<accession>A5IS85</accession>
<name>PYRB_STAA9</name>
<gene>
    <name evidence="1" type="primary">pyrB</name>
    <name type="ordered locus">SaurJH9_1259</name>
</gene>
<protein>
    <recommendedName>
        <fullName evidence="1">Aspartate carbamoyltransferase catalytic subunit</fullName>
        <ecNumber evidence="1">2.1.3.2</ecNumber>
    </recommendedName>
    <alternativeName>
        <fullName evidence="1">Aspartate transcarbamylase</fullName>
        <shortName evidence="1">ATCase</shortName>
    </alternativeName>
</protein>
<sequence length="293" mass="33258">MNHLLSMEHLSTDQIYKLIQKASQFKSGERQLPNFEGKYVANLFFENSTRTKCSFEMAELKLGLKTISFETSTSSVSKGESLYDTCKTLESIGCDLLVIRHPFNNYYEKLANINIPIANAGDGSGQHPTQSLLDLMTIYEEYGYFEGLNVLICGDIKNSRVARSNYHSLKALGANVMFNSPNAWIDDSLEAPYVNIDDVIETVDIVMLLRIQHERHGLAEETRFAADDYHQKHGLNEVRYNKLQEHAIVMHPAPVNRGVEIQSDLVEASKSRIFKQMENGVYLRMAVIDELLK</sequence>
<keyword id="KW-0665">Pyrimidine biosynthesis</keyword>
<keyword id="KW-0808">Transferase</keyword>
<organism>
    <name type="scientific">Staphylococcus aureus (strain JH9)</name>
    <dbReference type="NCBI Taxonomy" id="359786"/>
    <lineage>
        <taxon>Bacteria</taxon>
        <taxon>Bacillati</taxon>
        <taxon>Bacillota</taxon>
        <taxon>Bacilli</taxon>
        <taxon>Bacillales</taxon>
        <taxon>Staphylococcaceae</taxon>
        <taxon>Staphylococcus</taxon>
    </lineage>
</organism>
<dbReference type="EC" id="2.1.3.2" evidence="1"/>
<dbReference type="EMBL" id="CP000703">
    <property type="protein sequence ID" value="ABQ49058.1"/>
    <property type="molecule type" value="Genomic_DNA"/>
</dbReference>
<dbReference type="RefSeq" id="WP_001016166.1">
    <property type="nucleotide sequence ID" value="NC_009487.1"/>
</dbReference>
<dbReference type="SMR" id="A5IS85"/>
<dbReference type="KEGG" id="saj:SaurJH9_1259"/>
<dbReference type="HOGENOM" id="CLU_043846_2_1_9"/>
<dbReference type="UniPathway" id="UPA00070">
    <property type="reaction ID" value="UER00116"/>
</dbReference>
<dbReference type="GO" id="GO:0005829">
    <property type="term" value="C:cytosol"/>
    <property type="evidence" value="ECO:0007669"/>
    <property type="project" value="TreeGrafter"/>
</dbReference>
<dbReference type="GO" id="GO:0016597">
    <property type="term" value="F:amino acid binding"/>
    <property type="evidence" value="ECO:0007669"/>
    <property type="project" value="InterPro"/>
</dbReference>
<dbReference type="GO" id="GO:0004070">
    <property type="term" value="F:aspartate carbamoyltransferase activity"/>
    <property type="evidence" value="ECO:0007669"/>
    <property type="project" value="UniProtKB-UniRule"/>
</dbReference>
<dbReference type="GO" id="GO:0006207">
    <property type="term" value="P:'de novo' pyrimidine nucleobase biosynthetic process"/>
    <property type="evidence" value="ECO:0007669"/>
    <property type="project" value="InterPro"/>
</dbReference>
<dbReference type="GO" id="GO:0044205">
    <property type="term" value="P:'de novo' UMP biosynthetic process"/>
    <property type="evidence" value="ECO:0007669"/>
    <property type="project" value="UniProtKB-UniRule"/>
</dbReference>
<dbReference type="GO" id="GO:0006520">
    <property type="term" value="P:amino acid metabolic process"/>
    <property type="evidence" value="ECO:0007669"/>
    <property type="project" value="InterPro"/>
</dbReference>
<dbReference type="FunFam" id="3.40.50.1370:FF:000011">
    <property type="entry name" value="Aspartate carbamoyltransferase"/>
    <property type="match status" value="1"/>
</dbReference>
<dbReference type="Gene3D" id="3.40.50.1370">
    <property type="entry name" value="Aspartate/ornithine carbamoyltransferase"/>
    <property type="match status" value="2"/>
</dbReference>
<dbReference type="HAMAP" id="MF_00001">
    <property type="entry name" value="Asp_carb_tr"/>
    <property type="match status" value="1"/>
</dbReference>
<dbReference type="InterPro" id="IPR006132">
    <property type="entry name" value="Asp/Orn_carbamoyltranf_P-bd"/>
</dbReference>
<dbReference type="InterPro" id="IPR006130">
    <property type="entry name" value="Asp/Orn_carbamoylTrfase"/>
</dbReference>
<dbReference type="InterPro" id="IPR036901">
    <property type="entry name" value="Asp/Orn_carbamoylTrfase_sf"/>
</dbReference>
<dbReference type="InterPro" id="IPR002082">
    <property type="entry name" value="Asp_carbamoyltransf"/>
</dbReference>
<dbReference type="InterPro" id="IPR006131">
    <property type="entry name" value="Asp_carbamoyltransf_Asp/Orn-bd"/>
</dbReference>
<dbReference type="NCBIfam" id="TIGR00670">
    <property type="entry name" value="asp_carb_tr"/>
    <property type="match status" value="1"/>
</dbReference>
<dbReference type="NCBIfam" id="NF002032">
    <property type="entry name" value="PRK00856.1"/>
    <property type="match status" value="1"/>
</dbReference>
<dbReference type="PANTHER" id="PTHR45753:SF6">
    <property type="entry name" value="ASPARTATE CARBAMOYLTRANSFERASE"/>
    <property type="match status" value="1"/>
</dbReference>
<dbReference type="PANTHER" id="PTHR45753">
    <property type="entry name" value="ORNITHINE CARBAMOYLTRANSFERASE, MITOCHONDRIAL"/>
    <property type="match status" value="1"/>
</dbReference>
<dbReference type="Pfam" id="PF00185">
    <property type="entry name" value="OTCace"/>
    <property type="match status" value="1"/>
</dbReference>
<dbReference type="Pfam" id="PF02729">
    <property type="entry name" value="OTCace_N"/>
    <property type="match status" value="1"/>
</dbReference>
<dbReference type="PRINTS" id="PR00100">
    <property type="entry name" value="AOTCASE"/>
</dbReference>
<dbReference type="PRINTS" id="PR00101">
    <property type="entry name" value="ATCASE"/>
</dbReference>
<dbReference type="SUPFAM" id="SSF53671">
    <property type="entry name" value="Aspartate/ornithine carbamoyltransferase"/>
    <property type="match status" value="1"/>
</dbReference>
<dbReference type="PROSITE" id="PS00097">
    <property type="entry name" value="CARBAMOYLTRANSFERASE"/>
    <property type="match status" value="1"/>
</dbReference>
<evidence type="ECO:0000255" key="1">
    <source>
        <dbReference type="HAMAP-Rule" id="MF_00001"/>
    </source>
</evidence>
<reference key="1">
    <citation type="submission" date="2007-05" db="EMBL/GenBank/DDBJ databases">
        <title>Complete sequence of chromosome of Staphylococcus aureus subsp. aureus JH9.</title>
        <authorList>
            <consortium name="US DOE Joint Genome Institute"/>
            <person name="Copeland A."/>
            <person name="Lucas S."/>
            <person name="Lapidus A."/>
            <person name="Barry K."/>
            <person name="Detter J.C."/>
            <person name="Glavina del Rio T."/>
            <person name="Hammon N."/>
            <person name="Israni S."/>
            <person name="Pitluck S."/>
            <person name="Chain P."/>
            <person name="Malfatti S."/>
            <person name="Shin M."/>
            <person name="Vergez L."/>
            <person name="Schmutz J."/>
            <person name="Larimer F."/>
            <person name="Land M."/>
            <person name="Hauser L."/>
            <person name="Kyrpides N."/>
            <person name="Kim E."/>
            <person name="Tomasz A."/>
            <person name="Richardson P."/>
        </authorList>
    </citation>
    <scope>NUCLEOTIDE SEQUENCE [LARGE SCALE GENOMIC DNA]</scope>
    <source>
        <strain>JH9</strain>
    </source>
</reference>